<dbReference type="EMBL" id="CU928161">
    <property type="protein sequence ID" value="CAR05890.1"/>
    <property type="molecule type" value="Genomic_DNA"/>
</dbReference>
<dbReference type="RefSeq" id="WP_000208757.1">
    <property type="nucleotide sequence ID" value="NC_011742.1"/>
</dbReference>
<dbReference type="SMR" id="B7MKV9"/>
<dbReference type="GeneID" id="93777670"/>
<dbReference type="KEGG" id="ecz:ECS88_4740"/>
<dbReference type="HOGENOM" id="CLU_156492_0_0_6"/>
<dbReference type="Proteomes" id="UP000000747">
    <property type="component" value="Chromosome"/>
</dbReference>
<dbReference type="GO" id="GO:0045283">
    <property type="term" value="C:fumarate reductase complex"/>
    <property type="evidence" value="ECO:0007669"/>
    <property type="project" value="UniProtKB-UniRule"/>
</dbReference>
<dbReference type="GO" id="GO:0005886">
    <property type="term" value="C:plasma membrane"/>
    <property type="evidence" value="ECO:0007669"/>
    <property type="project" value="UniProtKB-SubCell"/>
</dbReference>
<dbReference type="GO" id="GO:0000104">
    <property type="term" value="F:succinate dehydrogenase activity"/>
    <property type="evidence" value="ECO:0007669"/>
    <property type="project" value="UniProtKB-UniRule"/>
</dbReference>
<dbReference type="CDD" id="cd00546">
    <property type="entry name" value="QFR_TypeD_subunitC"/>
    <property type="match status" value="1"/>
</dbReference>
<dbReference type="FunFam" id="1.20.1300.10:FF:000003">
    <property type="entry name" value="Fumarate reductase subunit C"/>
    <property type="match status" value="1"/>
</dbReference>
<dbReference type="Gene3D" id="1.20.1300.10">
    <property type="entry name" value="Fumarate reductase/succinate dehydrogenase, transmembrane subunit"/>
    <property type="match status" value="1"/>
</dbReference>
<dbReference type="HAMAP" id="MF_00708">
    <property type="entry name" value="Fumarate_red_C"/>
    <property type="match status" value="1"/>
</dbReference>
<dbReference type="InterPro" id="IPR003510">
    <property type="entry name" value="Fumarate_red_C"/>
</dbReference>
<dbReference type="InterPro" id="IPR034804">
    <property type="entry name" value="SQR/QFR_C/D"/>
</dbReference>
<dbReference type="NCBIfam" id="NF003445">
    <property type="entry name" value="PRK04987.1"/>
    <property type="match status" value="1"/>
</dbReference>
<dbReference type="Pfam" id="PF02300">
    <property type="entry name" value="Fumarate_red_C"/>
    <property type="match status" value="1"/>
</dbReference>
<dbReference type="PIRSF" id="PIRSF000180">
    <property type="entry name" value="FrdC"/>
    <property type="match status" value="1"/>
</dbReference>
<dbReference type="SUPFAM" id="SSF81343">
    <property type="entry name" value="Fumarate reductase respiratory complex transmembrane subunits"/>
    <property type="match status" value="1"/>
</dbReference>
<feature type="chain" id="PRO_1000132369" description="Fumarate reductase subunit C">
    <location>
        <begin position="1"/>
        <end position="131"/>
    </location>
</feature>
<feature type="transmembrane region" description="Helical" evidence="1">
    <location>
        <begin position="30"/>
        <end position="50"/>
    </location>
</feature>
<feature type="transmembrane region" description="Helical" evidence="1">
    <location>
        <begin position="63"/>
        <end position="83"/>
    </location>
</feature>
<feature type="transmembrane region" description="Helical" evidence="1">
    <location>
        <begin position="109"/>
        <end position="129"/>
    </location>
</feature>
<keyword id="KW-0997">Cell inner membrane</keyword>
<keyword id="KW-1003">Cell membrane</keyword>
<keyword id="KW-0472">Membrane</keyword>
<keyword id="KW-1185">Reference proteome</keyword>
<keyword id="KW-0812">Transmembrane</keyword>
<keyword id="KW-1133">Transmembrane helix</keyword>
<organism>
    <name type="scientific">Escherichia coli O45:K1 (strain S88 / ExPEC)</name>
    <dbReference type="NCBI Taxonomy" id="585035"/>
    <lineage>
        <taxon>Bacteria</taxon>
        <taxon>Pseudomonadati</taxon>
        <taxon>Pseudomonadota</taxon>
        <taxon>Gammaproteobacteria</taxon>
        <taxon>Enterobacterales</taxon>
        <taxon>Enterobacteriaceae</taxon>
        <taxon>Escherichia</taxon>
    </lineage>
</organism>
<proteinExistence type="inferred from homology"/>
<sequence>MTTKRKPYVRPMTSTWWKKLPFYRFYMLREGTAVPAVWFSIELIFGLFALKNGPEAWAGFVDFLQNPVIVIINLITLAAALLHTKTWFELAPKAANIIVKDEKMGPEPIIKSLWAVTVVATIVILFVALYW</sequence>
<comment type="function">
    <text evidence="1">Two distinct, membrane-bound, FAD-containing enzymes are responsible for the catalysis of fumarate and succinate interconversion; fumarate reductase is used in anaerobic growth, and succinate dehydrogenase is used in aerobic growth. Anchors the catalytic components of the fumarate reductase complex to the cell inner membrane, binds quinones.</text>
</comment>
<comment type="subunit">
    <text evidence="1">Part of an enzyme complex containing four subunits: a flavoprotein (FrdA), an iron-sulfur protein (FrdB), and two hydrophobic anchor proteins (FrdC and FrdD).</text>
</comment>
<comment type="subcellular location">
    <subcellularLocation>
        <location evidence="1">Cell inner membrane</location>
        <topology evidence="1">Multi-pass membrane protein</topology>
    </subcellularLocation>
</comment>
<comment type="similarity">
    <text evidence="1">Belongs to the FrdC family.</text>
</comment>
<accession>B7MKV9</accession>
<name>FRDC_ECO45</name>
<evidence type="ECO:0000255" key="1">
    <source>
        <dbReference type="HAMAP-Rule" id="MF_00708"/>
    </source>
</evidence>
<gene>
    <name evidence="1" type="primary">frdC</name>
    <name type="ordered locus">ECS88_4740</name>
</gene>
<reference key="1">
    <citation type="journal article" date="2009" name="PLoS Genet.">
        <title>Organised genome dynamics in the Escherichia coli species results in highly diverse adaptive paths.</title>
        <authorList>
            <person name="Touchon M."/>
            <person name="Hoede C."/>
            <person name="Tenaillon O."/>
            <person name="Barbe V."/>
            <person name="Baeriswyl S."/>
            <person name="Bidet P."/>
            <person name="Bingen E."/>
            <person name="Bonacorsi S."/>
            <person name="Bouchier C."/>
            <person name="Bouvet O."/>
            <person name="Calteau A."/>
            <person name="Chiapello H."/>
            <person name="Clermont O."/>
            <person name="Cruveiller S."/>
            <person name="Danchin A."/>
            <person name="Diard M."/>
            <person name="Dossat C."/>
            <person name="Karoui M.E."/>
            <person name="Frapy E."/>
            <person name="Garry L."/>
            <person name="Ghigo J.M."/>
            <person name="Gilles A.M."/>
            <person name="Johnson J."/>
            <person name="Le Bouguenec C."/>
            <person name="Lescat M."/>
            <person name="Mangenot S."/>
            <person name="Martinez-Jehanne V."/>
            <person name="Matic I."/>
            <person name="Nassif X."/>
            <person name="Oztas S."/>
            <person name="Petit M.A."/>
            <person name="Pichon C."/>
            <person name="Rouy Z."/>
            <person name="Ruf C.S."/>
            <person name="Schneider D."/>
            <person name="Tourret J."/>
            <person name="Vacherie B."/>
            <person name="Vallenet D."/>
            <person name="Medigue C."/>
            <person name="Rocha E.P.C."/>
            <person name="Denamur E."/>
        </authorList>
    </citation>
    <scope>NUCLEOTIDE SEQUENCE [LARGE SCALE GENOMIC DNA]</scope>
    <source>
        <strain>S88 / ExPEC</strain>
    </source>
</reference>
<protein>
    <recommendedName>
        <fullName evidence="1">Fumarate reductase subunit C</fullName>
    </recommendedName>
    <alternativeName>
        <fullName evidence="1">Fumarate reductase 15 kDa hydrophobic protein</fullName>
    </alternativeName>
    <alternativeName>
        <fullName evidence="1">Quinol-fumarate reductase subunit C</fullName>
        <shortName evidence="1">QFR subunit C</shortName>
    </alternativeName>
</protein>